<keyword id="KW-0687">Ribonucleoprotein</keyword>
<keyword id="KW-0689">Ribosomal protein</keyword>
<proteinExistence type="inferred from homology"/>
<organism>
    <name type="scientific">Lysinibacillus sphaericus (strain C3-41)</name>
    <dbReference type="NCBI Taxonomy" id="444177"/>
    <lineage>
        <taxon>Bacteria</taxon>
        <taxon>Bacillati</taxon>
        <taxon>Bacillota</taxon>
        <taxon>Bacilli</taxon>
        <taxon>Bacillales</taxon>
        <taxon>Bacillaceae</taxon>
        <taxon>Lysinibacillus</taxon>
    </lineage>
</organism>
<comment type="similarity">
    <text evidence="1">Belongs to the bacterial ribosomal protein bS16 family.</text>
</comment>
<accession>B1HQI0</accession>
<dbReference type="EMBL" id="CP000817">
    <property type="protein sequence ID" value="ACA39127.1"/>
    <property type="molecule type" value="Genomic_DNA"/>
</dbReference>
<dbReference type="RefSeq" id="WP_004269411.1">
    <property type="nucleotide sequence ID" value="NC_010382.1"/>
</dbReference>
<dbReference type="SMR" id="B1HQI0"/>
<dbReference type="EnsemblBacteria" id="ACA39127">
    <property type="protein sequence ID" value="ACA39127"/>
    <property type="gene ID" value="Bsph_1527"/>
</dbReference>
<dbReference type="GeneID" id="74904105"/>
<dbReference type="KEGG" id="lsp:Bsph_1527"/>
<dbReference type="HOGENOM" id="CLU_100590_5_0_9"/>
<dbReference type="Proteomes" id="UP000002164">
    <property type="component" value="Chromosome"/>
</dbReference>
<dbReference type="GO" id="GO:0005737">
    <property type="term" value="C:cytoplasm"/>
    <property type="evidence" value="ECO:0007669"/>
    <property type="project" value="UniProtKB-ARBA"/>
</dbReference>
<dbReference type="GO" id="GO:0015935">
    <property type="term" value="C:small ribosomal subunit"/>
    <property type="evidence" value="ECO:0007669"/>
    <property type="project" value="TreeGrafter"/>
</dbReference>
<dbReference type="GO" id="GO:0003735">
    <property type="term" value="F:structural constituent of ribosome"/>
    <property type="evidence" value="ECO:0007669"/>
    <property type="project" value="InterPro"/>
</dbReference>
<dbReference type="GO" id="GO:0006412">
    <property type="term" value="P:translation"/>
    <property type="evidence" value="ECO:0007669"/>
    <property type="project" value="UniProtKB-UniRule"/>
</dbReference>
<dbReference type="FunFam" id="3.30.1320.10:FF:000002">
    <property type="entry name" value="30S ribosomal protein S16"/>
    <property type="match status" value="1"/>
</dbReference>
<dbReference type="Gene3D" id="3.30.1320.10">
    <property type="match status" value="1"/>
</dbReference>
<dbReference type="HAMAP" id="MF_00385">
    <property type="entry name" value="Ribosomal_bS16"/>
    <property type="match status" value="1"/>
</dbReference>
<dbReference type="InterPro" id="IPR000307">
    <property type="entry name" value="Ribosomal_bS16"/>
</dbReference>
<dbReference type="InterPro" id="IPR020592">
    <property type="entry name" value="Ribosomal_bS16_CS"/>
</dbReference>
<dbReference type="InterPro" id="IPR023803">
    <property type="entry name" value="Ribosomal_bS16_dom_sf"/>
</dbReference>
<dbReference type="NCBIfam" id="TIGR00002">
    <property type="entry name" value="S16"/>
    <property type="match status" value="1"/>
</dbReference>
<dbReference type="PANTHER" id="PTHR12919">
    <property type="entry name" value="30S RIBOSOMAL PROTEIN S16"/>
    <property type="match status" value="1"/>
</dbReference>
<dbReference type="PANTHER" id="PTHR12919:SF20">
    <property type="entry name" value="SMALL RIBOSOMAL SUBUNIT PROTEIN BS16M"/>
    <property type="match status" value="1"/>
</dbReference>
<dbReference type="Pfam" id="PF00886">
    <property type="entry name" value="Ribosomal_S16"/>
    <property type="match status" value="1"/>
</dbReference>
<dbReference type="SUPFAM" id="SSF54565">
    <property type="entry name" value="Ribosomal protein S16"/>
    <property type="match status" value="1"/>
</dbReference>
<dbReference type="PROSITE" id="PS00732">
    <property type="entry name" value="RIBOSOMAL_S16"/>
    <property type="match status" value="1"/>
</dbReference>
<reference key="1">
    <citation type="journal article" date="2008" name="J. Bacteriol.">
        <title>Complete genome sequence of the mosquitocidal bacterium Bacillus sphaericus C3-41 and comparison with those of closely related Bacillus species.</title>
        <authorList>
            <person name="Hu X."/>
            <person name="Fan W."/>
            <person name="Han B."/>
            <person name="Liu H."/>
            <person name="Zheng D."/>
            <person name="Li Q."/>
            <person name="Dong W."/>
            <person name="Yan J."/>
            <person name="Gao M."/>
            <person name="Berry C."/>
            <person name="Yuan Z."/>
        </authorList>
    </citation>
    <scope>NUCLEOTIDE SEQUENCE [LARGE SCALE GENOMIC DNA]</scope>
    <source>
        <strain>C3-41</strain>
    </source>
</reference>
<evidence type="ECO:0000255" key="1">
    <source>
        <dbReference type="HAMAP-Rule" id="MF_00385"/>
    </source>
</evidence>
<evidence type="ECO:0000305" key="2"/>
<name>RS16_LYSSC</name>
<sequence length="90" mass="10222">MAVKIRLKRMGAKKSPFYRIVVADARSPRDGRQIETVGTYNPLTQPATVNIDEEKALKWLADGAKPSDTVRNLFSEQGIMEKFHNQKFSK</sequence>
<protein>
    <recommendedName>
        <fullName evidence="1">Small ribosomal subunit protein bS16</fullName>
    </recommendedName>
    <alternativeName>
        <fullName evidence="2">30S ribosomal protein S16</fullName>
    </alternativeName>
</protein>
<feature type="chain" id="PRO_1000196429" description="Small ribosomal subunit protein bS16">
    <location>
        <begin position="1"/>
        <end position="90"/>
    </location>
</feature>
<gene>
    <name evidence="1" type="primary">rpsP</name>
    <name type="ordered locus">Bsph_1527</name>
</gene>